<feature type="signal peptide" evidence="1">
    <location>
        <begin position="1"/>
        <end position="23"/>
    </location>
</feature>
<feature type="chain" id="PRO_0000035337" description="Neurotoxin X-29S">
    <location>
        <begin position="24"/>
        <end position="54"/>
    </location>
</feature>
<feature type="disulfide bond" evidence="1">
    <location>
        <begin position="30"/>
        <end position="45"/>
    </location>
</feature>
<feature type="disulfide bond" evidence="1">
    <location>
        <begin position="36"/>
        <end position="50"/>
    </location>
</feature>
<feature type="disulfide bond" evidence="1">
    <location>
        <begin position="39"/>
        <end position="53"/>
    </location>
</feature>
<organism>
    <name type="scientific">Olivierus martensii</name>
    <name type="common">Manchurian scorpion</name>
    <name type="synonym">Mesobuthus martensii</name>
    <dbReference type="NCBI Taxonomy" id="34649"/>
    <lineage>
        <taxon>Eukaryota</taxon>
        <taxon>Metazoa</taxon>
        <taxon>Ecdysozoa</taxon>
        <taxon>Arthropoda</taxon>
        <taxon>Chelicerata</taxon>
        <taxon>Arachnida</taxon>
        <taxon>Scorpiones</taxon>
        <taxon>Buthida</taxon>
        <taxon>Buthoidea</taxon>
        <taxon>Buthidae</taxon>
        <taxon>Olivierus</taxon>
    </lineage>
</organism>
<reference key="1">
    <citation type="submission" date="2002-09" db="EMBL/GenBank/DDBJ databases">
        <title>A potassium channel toxin from scorpion Buthus martensii Karsch.</title>
        <authorList>
            <person name="Wang C.-G."/>
            <person name="Chi C.-W."/>
        </authorList>
    </citation>
    <scope>NUCLEOTIDE SEQUENCE [GENOMIC DNA]</scope>
</reference>
<accession>Q7Z0F1</accession>
<dbReference type="EMBL" id="AY147405">
    <property type="protein sequence ID" value="AAN64408.1"/>
    <property type="molecule type" value="Genomic_DNA"/>
</dbReference>
<dbReference type="SMR" id="Q7Z0F1"/>
<dbReference type="GO" id="GO:0005576">
    <property type="term" value="C:extracellular region"/>
    <property type="evidence" value="ECO:0007669"/>
    <property type="project" value="UniProtKB-SubCell"/>
</dbReference>
<dbReference type="InterPro" id="IPR036574">
    <property type="entry name" value="Scorpion_toxin-like_sf"/>
</dbReference>
<dbReference type="SUPFAM" id="SSF57095">
    <property type="entry name" value="Scorpion toxin-like"/>
    <property type="match status" value="1"/>
</dbReference>
<name>SCKH_OLIMR</name>
<sequence>MKIFFAVLVILVLFSMLIWTAYGTPYPVNCKTDRDCVMCGLGISCKNGYCQSCTR</sequence>
<protein>
    <recommendedName>
        <fullName>Neurotoxin X-29S</fullName>
    </recommendedName>
</protein>
<keyword id="KW-1015">Disulfide bond</keyword>
<keyword id="KW-0964">Secreted</keyword>
<keyword id="KW-0732">Signal</keyword>
<evidence type="ECO:0000250" key="1"/>
<proteinExistence type="inferred from homology"/>
<comment type="subcellular location">
    <subcellularLocation>
        <location>Secreted</location>
    </subcellularLocation>
</comment>
<comment type="tissue specificity">
    <text>Expressed by the venom gland.</text>
</comment>
<comment type="miscellaneous">
    <text evidence="1">Negative results: does not show any effect on Na(+), Ca(2+) currents, nor on voltage-gated and calcium-activated potassium channels.</text>
</comment>